<name>PSB28_ORYSJ</name>
<dbReference type="EMBL" id="AP003269">
    <property type="protein sequence ID" value="BAD87310.1"/>
    <property type="molecule type" value="Genomic_DNA"/>
</dbReference>
<dbReference type="EMBL" id="AP008207">
    <property type="protein sequence ID" value="BAF07253.1"/>
    <property type="status" value="ALT_SEQ"/>
    <property type="molecule type" value="Genomic_DNA"/>
</dbReference>
<dbReference type="EMBL" id="AP014957">
    <property type="protein sequence ID" value="BAS76131.1"/>
    <property type="molecule type" value="Genomic_DNA"/>
</dbReference>
<dbReference type="EMBL" id="CM000138">
    <property type="protein sequence ID" value="EAZ14777.1"/>
    <property type="molecule type" value="Genomic_DNA"/>
</dbReference>
<dbReference type="EMBL" id="AK242889">
    <property type="protein sequence ID" value="BAH01372.1"/>
    <property type="molecule type" value="mRNA"/>
</dbReference>
<dbReference type="EMBL" id="AF366557">
    <property type="protein sequence ID" value="AAM00366.1"/>
    <property type="molecule type" value="mRNA"/>
</dbReference>
<dbReference type="RefSeq" id="XP_015650407.1">
    <property type="nucleotide sequence ID" value="XM_015794921.1"/>
</dbReference>
<dbReference type="SMR" id="Q0JG75"/>
<dbReference type="FunCoup" id="Q0JG75">
    <property type="interactions" value="931"/>
</dbReference>
<dbReference type="STRING" id="39947.Q0JG75"/>
<dbReference type="PaxDb" id="39947-Q0JG75"/>
<dbReference type="EnsemblPlants" id="Os01t0938100-01">
    <property type="protein sequence ID" value="Os01t0938100-01"/>
    <property type="gene ID" value="Os01g0938100"/>
</dbReference>
<dbReference type="Gramene" id="Os01t0938100-01">
    <property type="protein sequence ID" value="Os01t0938100-01"/>
    <property type="gene ID" value="Os01g0938100"/>
</dbReference>
<dbReference type="KEGG" id="dosa:Os01g0938100"/>
<dbReference type="eggNOG" id="ENOG502RMFI">
    <property type="taxonomic scope" value="Eukaryota"/>
</dbReference>
<dbReference type="HOGENOM" id="CLU_098454_0_0_1"/>
<dbReference type="InParanoid" id="Q0JG75"/>
<dbReference type="OMA" id="VIMMVKP"/>
<dbReference type="OrthoDB" id="1938621at2759"/>
<dbReference type="Proteomes" id="UP000000763">
    <property type="component" value="Chromosome 1"/>
</dbReference>
<dbReference type="Proteomes" id="UP000007752">
    <property type="component" value="Chromosome 1"/>
</dbReference>
<dbReference type="Proteomes" id="UP000059680">
    <property type="component" value="Chromosome 1"/>
</dbReference>
<dbReference type="GO" id="GO:0009535">
    <property type="term" value="C:chloroplast thylakoid membrane"/>
    <property type="evidence" value="ECO:0007669"/>
    <property type="project" value="UniProtKB-SubCell"/>
</dbReference>
<dbReference type="GO" id="GO:0009654">
    <property type="term" value="C:photosystem II oxygen evolving complex"/>
    <property type="evidence" value="ECO:0007669"/>
    <property type="project" value="InterPro"/>
</dbReference>
<dbReference type="GO" id="GO:0015979">
    <property type="term" value="P:photosynthesis"/>
    <property type="evidence" value="ECO:0007669"/>
    <property type="project" value="UniProtKB-KW"/>
</dbReference>
<dbReference type="FunFam" id="2.40.30.220:FF:000001">
    <property type="entry name" value="Photosystem II reaction center Psb28 protein"/>
    <property type="match status" value="1"/>
</dbReference>
<dbReference type="Gene3D" id="2.40.30.220">
    <property type="entry name" value="Photosystem II Psb28"/>
    <property type="match status" value="1"/>
</dbReference>
<dbReference type="HAMAP" id="MF_01370">
    <property type="entry name" value="PSII_Psb28"/>
    <property type="match status" value="1"/>
</dbReference>
<dbReference type="InterPro" id="IPR038676">
    <property type="entry name" value="Psb28_c1_sf"/>
</dbReference>
<dbReference type="InterPro" id="IPR005610">
    <property type="entry name" value="PSII_Psb28_class-1"/>
</dbReference>
<dbReference type="NCBIfam" id="TIGR03047">
    <property type="entry name" value="PS_II_psb28"/>
    <property type="match status" value="1"/>
</dbReference>
<dbReference type="PANTHER" id="PTHR34963">
    <property type="match status" value="1"/>
</dbReference>
<dbReference type="PANTHER" id="PTHR34963:SF2">
    <property type="entry name" value="PHOTOSYSTEM II REACTION CENTER PSB28 PROTEIN, CHLOROPLASTIC"/>
    <property type="match status" value="1"/>
</dbReference>
<dbReference type="Pfam" id="PF03912">
    <property type="entry name" value="Psb28"/>
    <property type="match status" value="1"/>
</dbReference>
<feature type="transit peptide" description="Chloroplast" evidence="2">
    <location>
        <begin position="1"/>
        <end position="64"/>
    </location>
</feature>
<feature type="chain" id="PRO_0000271578" description="Photosystem II reaction center PSB28 protein, chloroplastic">
    <location>
        <begin position="65"/>
        <end position="180"/>
    </location>
</feature>
<feature type="region of interest" description="Disordered" evidence="3">
    <location>
        <begin position="16"/>
        <end position="39"/>
    </location>
</feature>
<feature type="sequence conflict" description="In Ref. 7; AAM00366." evidence="4" ref="7">
    <original>I</original>
    <variation>L</variation>
    <location>
        <position position="83"/>
    </location>
</feature>
<feature type="sequence conflict" description="In Ref. 7; AAM00366." evidence="4" ref="7">
    <original>R</original>
    <variation>G</variation>
    <location>
        <position position="92"/>
    </location>
</feature>
<feature type="sequence conflict" description="In Ref. 7; AAM00366." evidence="4" ref="7">
    <original>N</original>
    <variation>K</variation>
    <location>
        <position position="96"/>
    </location>
</feature>
<feature type="sequence conflict" description="In Ref. 7; AAM00366." evidence="4" ref="7">
    <original>E</original>
    <variation>K</variation>
    <location>
        <position position="114"/>
    </location>
</feature>
<feature type="sequence conflict" description="In Ref. 7; AAM00366." evidence="4" ref="7">
    <original>G</original>
    <variation>V</variation>
    <location>
        <position position="174"/>
    </location>
</feature>
<reference key="1">
    <citation type="journal article" date="2002" name="Nature">
        <title>The genome sequence and structure of rice chromosome 1.</title>
        <authorList>
            <person name="Sasaki T."/>
            <person name="Matsumoto T."/>
            <person name="Yamamoto K."/>
            <person name="Sakata K."/>
            <person name="Baba T."/>
            <person name="Katayose Y."/>
            <person name="Wu J."/>
            <person name="Niimura Y."/>
            <person name="Cheng Z."/>
            <person name="Nagamura Y."/>
            <person name="Antonio B.A."/>
            <person name="Kanamori H."/>
            <person name="Hosokawa S."/>
            <person name="Masukawa M."/>
            <person name="Arikawa K."/>
            <person name="Chiden Y."/>
            <person name="Hayashi M."/>
            <person name="Okamoto M."/>
            <person name="Ando T."/>
            <person name="Aoki H."/>
            <person name="Arita K."/>
            <person name="Hamada M."/>
            <person name="Harada C."/>
            <person name="Hijishita S."/>
            <person name="Honda M."/>
            <person name="Ichikawa Y."/>
            <person name="Idonuma A."/>
            <person name="Iijima M."/>
            <person name="Ikeda M."/>
            <person name="Ikeno M."/>
            <person name="Ito S."/>
            <person name="Ito T."/>
            <person name="Ito Y."/>
            <person name="Ito Y."/>
            <person name="Iwabuchi A."/>
            <person name="Kamiya K."/>
            <person name="Karasawa W."/>
            <person name="Katagiri S."/>
            <person name="Kikuta A."/>
            <person name="Kobayashi N."/>
            <person name="Kono I."/>
            <person name="Machita K."/>
            <person name="Maehara T."/>
            <person name="Mizuno H."/>
            <person name="Mizubayashi T."/>
            <person name="Mukai Y."/>
            <person name="Nagasaki H."/>
            <person name="Nakashima M."/>
            <person name="Nakama Y."/>
            <person name="Nakamichi Y."/>
            <person name="Nakamura M."/>
            <person name="Namiki N."/>
            <person name="Negishi M."/>
            <person name="Ohta I."/>
            <person name="Ono N."/>
            <person name="Saji S."/>
            <person name="Sakai K."/>
            <person name="Shibata M."/>
            <person name="Shimokawa T."/>
            <person name="Shomura A."/>
            <person name="Song J."/>
            <person name="Takazaki Y."/>
            <person name="Terasawa K."/>
            <person name="Tsuji K."/>
            <person name="Waki K."/>
            <person name="Yamagata H."/>
            <person name="Yamane H."/>
            <person name="Yoshiki S."/>
            <person name="Yoshihara R."/>
            <person name="Yukawa K."/>
            <person name="Zhong H."/>
            <person name="Iwama H."/>
            <person name="Endo T."/>
            <person name="Ito H."/>
            <person name="Hahn J.H."/>
            <person name="Kim H.-I."/>
            <person name="Eun M.-Y."/>
            <person name="Yano M."/>
            <person name="Jiang J."/>
            <person name="Gojobori T."/>
        </authorList>
    </citation>
    <scope>NUCLEOTIDE SEQUENCE [LARGE SCALE GENOMIC DNA]</scope>
    <source>
        <strain>cv. Nipponbare</strain>
    </source>
</reference>
<reference key="2">
    <citation type="journal article" date="2005" name="Nature">
        <title>The map-based sequence of the rice genome.</title>
        <authorList>
            <consortium name="International rice genome sequencing project (IRGSP)"/>
        </authorList>
    </citation>
    <scope>NUCLEOTIDE SEQUENCE [LARGE SCALE GENOMIC DNA]</scope>
    <source>
        <strain>cv. Nipponbare</strain>
    </source>
</reference>
<reference key="3">
    <citation type="journal article" date="2008" name="Nucleic Acids Res.">
        <title>The rice annotation project database (RAP-DB): 2008 update.</title>
        <authorList>
            <consortium name="The rice annotation project (RAP)"/>
        </authorList>
    </citation>
    <scope>GENOME REANNOTATION</scope>
    <source>
        <strain>cv. Nipponbare</strain>
    </source>
</reference>
<reference key="4">
    <citation type="journal article" date="2013" name="Rice">
        <title>Improvement of the Oryza sativa Nipponbare reference genome using next generation sequence and optical map data.</title>
        <authorList>
            <person name="Kawahara Y."/>
            <person name="de la Bastide M."/>
            <person name="Hamilton J.P."/>
            <person name="Kanamori H."/>
            <person name="McCombie W.R."/>
            <person name="Ouyang S."/>
            <person name="Schwartz D.C."/>
            <person name="Tanaka T."/>
            <person name="Wu J."/>
            <person name="Zhou S."/>
            <person name="Childs K.L."/>
            <person name="Davidson R.M."/>
            <person name="Lin H."/>
            <person name="Quesada-Ocampo L."/>
            <person name="Vaillancourt B."/>
            <person name="Sakai H."/>
            <person name="Lee S.S."/>
            <person name="Kim J."/>
            <person name="Numa H."/>
            <person name="Itoh T."/>
            <person name="Buell C.R."/>
            <person name="Matsumoto T."/>
        </authorList>
    </citation>
    <scope>GENOME REANNOTATION</scope>
    <source>
        <strain>cv. Nipponbare</strain>
    </source>
</reference>
<reference key="5">
    <citation type="journal article" date="2005" name="PLoS Biol.">
        <title>The genomes of Oryza sativa: a history of duplications.</title>
        <authorList>
            <person name="Yu J."/>
            <person name="Wang J."/>
            <person name="Lin W."/>
            <person name="Li S."/>
            <person name="Li H."/>
            <person name="Zhou J."/>
            <person name="Ni P."/>
            <person name="Dong W."/>
            <person name="Hu S."/>
            <person name="Zeng C."/>
            <person name="Zhang J."/>
            <person name="Zhang Y."/>
            <person name="Li R."/>
            <person name="Xu Z."/>
            <person name="Li S."/>
            <person name="Li X."/>
            <person name="Zheng H."/>
            <person name="Cong L."/>
            <person name="Lin L."/>
            <person name="Yin J."/>
            <person name="Geng J."/>
            <person name="Li G."/>
            <person name="Shi J."/>
            <person name="Liu J."/>
            <person name="Lv H."/>
            <person name="Li J."/>
            <person name="Wang J."/>
            <person name="Deng Y."/>
            <person name="Ran L."/>
            <person name="Shi X."/>
            <person name="Wang X."/>
            <person name="Wu Q."/>
            <person name="Li C."/>
            <person name="Ren X."/>
            <person name="Wang J."/>
            <person name="Wang X."/>
            <person name="Li D."/>
            <person name="Liu D."/>
            <person name="Zhang X."/>
            <person name="Ji Z."/>
            <person name="Zhao W."/>
            <person name="Sun Y."/>
            <person name="Zhang Z."/>
            <person name="Bao J."/>
            <person name="Han Y."/>
            <person name="Dong L."/>
            <person name="Ji J."/>
            <person name="Chen P."/>
            <person name="Wu S."/>
            <person name="Liu J."/>
            <person name="Xiao Y."/>
            <person name="Bu D."/>
            <person name="Tan J."/>
            <person name="Yang L."/>
            <person name="Ye C."/>
            <person name="Zhang J."/>
            <person name="Xu J."/>
            <person name="Zhou Y."/>
            <person name="Yu Y."/>
            <person name="Zhang B."/>
            <person name="Zhuang S."/>
            <person name="Wei H."/>
            <person name="Liu B."/>
            <person name="Lei M."/>
            <person name="Yu H."/>
            <person name="Li Y."/>
            <person name="Xu H."/>
            <person name="Wei S."/>
            <person name="He X."/>
            <person name="Fang L."/>
            <person name="Zhang Z."/>
            <person name="Zhang Y."/>
            <person name="Huang X."/>
            <person name="Su Z."/>
            <person name="Tong W."/>
            <person name="Li J."/>
            <person name="Tong Z."/>
            <person name="Li S."/>
            <person name="Ye J."/>
            <person name="Wang L."/>
            <person name="Fang L."/>
            <person name="Lei T."/>
            <person name="Chen C.-S."/>
            <person name="Chen H.-C."/>
            <person name="Xu Z."/>
            <person name="Li H."/>
            <person name="Huang H."/>
            <person name="Zhang F."/>
            <person name="Xu H."/>
            <person name="Li N."/>
            <person name="Zhao C."/>
            <person name="Li S."/>
            <person name="Dong L."/>
            <person name="Huang Y."/>
            <person name="Li L."/>
            <person name="Xi Y."/>
            <person name="Qi Q."/>
            <person name="Li W."/>
            <person name="Zhang B."/>
            <person name="Hu W."/>
            <person name="Zhang Y."/>
            <person name="Tian X."/>
            <person name="Jiao Y."/>
            <person name="Liang X."/>
            <person name="Jin J."/>
            <person name="Gao L."/>
            <person name="Zheng W."/>
            <person name="Hao B."/>
            <person name="Liu S.-M."/>
            <person name="Wang W."/>
            <person name="Yuan L."/>
            <person name="Cao M."/>
            <person name="McDermott J."/>
            <person name="Samudrala R."/>
            <person name="Wang J."/>
            <person name="Wong G.K.-S."/>
            <person name="Yang H."/>
        </authorList>
    </citation>
    <scope>NUCLEOTIDE SEQUENCE [LARGE SCALE GENOMIC DNA]</scope>
    <source>
        <strain>cv. Nipponbare</strain>
    </source>
</reference>
<reference key="6">
    <citation type="submission" date="2006-10" db="EMBL/GenBank/DDBJ databases">
        <title>Oryza sativa full length cDNA.</title>
        <authorList>
            <consortium name="The rice full-length cDNA consortium"/>
        </authorList>
    </citation>
    <scope>NUCLEOTIDE SEQUENCE [LARGE SCALE MRNA]</scope>
    <source>
        <strain>cv. Nipponbare</strain>
    </source>
</reference>
<reference key="7">
    <citation type="submission" date="2001-03" db="EMBL/GenBank/DDBJ databases">
        <title>Molecular cloning of salt responsive gene in rice, OSSRII.</title>
        <authorList>
            <person name="Pillai A."/>
            <person name="Seiji Y."/>
        </authorList>
    </citation>
    <scope>NUCLEOTIDE SEQUENCE [MRNA] OF 83-180</scope>
</reference>
<keyword id="KW-0150">Chloroplast</keyword>
<keyword id="KW-0472">Membrane</keyword>
<keyword id="KW-0602">Photosynthesis</keyword>
<keyword id="KW-0604">Photosystem II</keyword>
<keyword id="KW-0934">Plastid</keyword>
<keyword id="KW-1185">Reference proteome</keyword>
<keyword id="KW-0793">Thylakoid</keyword>
<keyword id="KW-0809">Transit peptide</keyword>
<gene>
    <name type="primary">PSB28</name>
    <name type="ordered locus">Os01g0938100</name>
    <name type="ordered locus">LOC_Os01g71190</name>
    <name evidence="5" type="ORF">OsJ_04705</name>
    <name type="ORF">P0504E02.24</name>
</gene>
<sequence>MAAVMKALAVASPISARAQPRRCPAGSSGGPSQSLHSSFGGVSLQCRRTKPASLHRSRPSMQVVMMAARPAIQFIQGTDEQTIPDVRLTKSRDGTNGVAIFTFDQPSVFDSSAELGDITGFYMIDDEGVLQSVDVSAKFVNGKPALIEAKYVMRTPREWDRFMRFMERYSQANGLQFVKK</sequence>
<proteinExistence type="evidence at transcript level"/>
<organism>
    <name type="scientific">Oryza sativa subsp. japonica</name>
    <name type="common">Rice</name>
    <dbReference type="NCBI Taxonomy" id="39947"/>
    <lineage>
        <taxon>Eukaryota</taxon>
        <taxon>Viridiplantae</taxon>
        <taxon>Streptophyta</taxon>
        <taxon>Embryophyta</taxon>
        <taxon>Tracheophyta</taxon>
        <taxon>Spermatophyta</taxon>
        <taxon>Magnoliopsida</taxon>
        <taxon>Liliopsida</taxon>
        <taxon>Poales</taxon>
        <taxon>Poaceae</taxon>
        <taxon>BOP clade</taxon>
        <taxon>Oryzoideae</taxon>
        <taxon>Oryzeae</taxon>
        <taxon>Oryzinae</taxon>
        <taxon>Oryza</taxon>
        <taxon>Oryza sativa</taxon>
    </lineage>
</organism>
<accession>Q0JG75</accession>
<accession>A3A1D0</accession>
<accession>Q5JMJ8</accession>
<accession>Q8S4X8</accession>
<comment type="subunit">
    <text evidence="4">Part of the photosystem II complex.</text>
</comment>
<comment type="subcellular location">
    <subcellularLocation>
        <location evidence="1">Plastid</location>
        <location evidence="1">Chloroplast thylakoid membrane</location>
        <topology evidence="1">Peripheral membrane protein</topology>
        <orientation evidence="1">Stromal side</orientation>
    </subcellularLocation>
</comment>
<comment type="similarity">
    <text evidence="4">Belongs to the Psb28 family.</text>
</comment>
<comment type="sequence caution" evidence="4">
    <conflict type="erroneous gene model prediction">
        <sequence resource="EMBL-CDS" id="BAF07253"/>
    </conflict>
</comment>
<evidence type="ECO:0000250" key="1"/>
<evidence type="ECO:0000255" key="2"/>
<evidence type="ECO:0000256" key="3">
    <source>
        <dbReference type="SAM" id="MobiDB-lite"/>
    </source>
</evidence>
<evidence type="ECO:0000305" key="4"/>
<evidence type="ECO:0000312" key="5">
    <source>
        <dbReference type="EMBL" id="EAZ14777.1"/>
    </source>
</evidence>
<protein>
    <recommendedName>
        <fullName>Photosystem II reaction center PSB28 protein, chloroplastic</fullName>
    </recommendedName>
    <alternativeName>
        <fullName>Photosystem II protein W-like</fullName>
    </alternativeName>
</protein>